<evidence type="ECO:0000255" key="1">
    <source>
        <dbReference type="HAMAP-Rule" id="MF_00412"/>
    </source>
</evidence>
<name>PROA_METC4</name>
<protein>
    <recommendedName>
        <fullName evidence="1">Gamma-glutamyl phosphate reductase</fullName>
        <shortName evidence="1">GPR</shortName>
        <ecNumber evidence="1">1.2.1.41</ecNumber>
    </recommendedName>
    <alternativeName>
        <fullName evidence="1">Glutamate-5-semialdehyde dehydrogenase</fullName>
    </alternativeName>
    <alternativeName>
        <fullName evidence="1">Glutamyl-gamma-semialdehyde dehydrogenase</fullName>
        <shortName evidence="1">GSA dehydrogenase</shortName>
    </alternativeName>
</protein>
<comment type="function">
    <text evidence="1">Catalyzes the NADPH-dependent reduction of L-glutamate 5-phosphate into L-glutamate 5-semialdehyde and phosphate. The product spontaneously undergoes cyclization to form 1-pyrroline-5-carboxylate.</text>
</comment>
<comment type="catalytic activity">
    <reaction evidence="1">
        <text>L-glutamate 5-semialdehyde + phosphate + NADP(+) = L-glutamyl 5-phosphate + NADPH + H(+)</text>
        <dbReference type="Rhea" id="RHEA:19541"/>
        <dbReference type="ChEBI" id="CHEBI:15378"/>
        <dbReference type="ChEBI" id="CHEBI:43474"/>
        <dbReference type="ChEBI" id="CHEBI:57783"/>
        <dbReference type="ChEBI" id="CHEBI:58066"/>
        <dbReference type="ChEBI" id="CHEBI:58274"/>
        <dbReference type="ChEBI" id="CHEBI:58349"/>
        <dbReference type="EC" id="1.2.1.41"/>
    </reaction>
</comment>
<comment type="pathway">
    <text evidence="1">Amino-acid biosynthesis; L-proline biosynthesis; L-glutamate 5-semialdehyde from L-glutamate: step 2/2.</text>
</comment>
<comment type="subcellular location">
    <subcellularLocation>
        <location evidence="1">Cytoplasm</location>
    </subcellularLocation>
</comment>
<comment type="similarity">
    <text evidence="1">Belongs to the gamma-glutamyl phosphate reductase family.</text>
</comment>
<organism>
    <name type="scientific">Methylorubrum extorquens (strain CM4 / NCIMB 13688)</name>
    <name type="common">Methylobacterium extorquens</name>
    <dbReference type="NCBI Taxonomy" id="440085"/>
    <lineage>
        <taxon>Bacteria</taxon>
        <taxon>Pseudomonadati</taxon>
        <taxon>Pseudomonadota</taxon>
        <taxon>Alphaproteobacteria</taxon>
        <taxon>Hyphomicrobiales</taxon>
        <taxon>Methylobacteriaceae</taxon>
        <taxon>Methylorubrum</taxon>
    </lineage>
</organism>
<proteinExistence type="inferred from homology"/>
<keyword id="KW-0028">Amino-acid biosynthesis</keyword>
<keyword id="KW-0963">Cytoplasm</keyword>
<keyword id="KW-0521">NADP</keyword>
<keyword id="KW-0560">Oxidoreductase</keyword>
<keyword id="KW-0641">Proline biosynthesis</keyword>
<reference key="1">
    <citation type="submission" date="2008-12" db="EMBL/GenBank/DDBJ databases">
        <title>Complete sequence of chromosome of Methylobacterium chloromethanicum CM4.</title>
        <authorList>
            <consortium name="US DOE Joint Genome Institute"/>
            <person name="Lucas S."/>
            <person name="Copeland A."/>
            <person name="Lapidus A."/>
            <person name="Glavina del Rio T."/>
            <person name="Dalin E."/>
            <person name="Tice H."/>
            <person name="Bruce D."/>
            <person name="Goodwin L."/>
            <person name="Pitluck S."/>
            <person name="Chertkov O."/>
            <person name="Brettin T."/>
            <person name="Detter J.C."/>
            <person name="Han C."/>
            <person name="Larimer F."/>
            <person name="Land M."/>
            <person name="Hauser L."/>
            <person name="Kyrpides N."/>
            <person name="Mikhailova N."/>
            <person name="Marx C."/>
            <person name="Richardson P."/>
        </authorList>
    </citation>
    <scope>NUCLEOTIDE SEQUENCE [LARGE SCALE GENOMIC DNA]</scope>
    <source>
        <strain>CM4 / NCIMB 13688</strain>
    </source>
</reference>
<dbReference type="EC" id="1.2.1.41" evidence="1"/>
<dbReference type="EMBL" id="CP001298">
    <property type="protein sequence ID" value="ACK83932.1"/>
    <property type="molecule type" value="Genomic_DNA"/>
</dbReference>
<dbReference type="RefSeq" id="WP_015951308.1">
    <property type="nucleotide sequence ID" value="NC_011757.1"/>
</dbReference>
<dbReference type="SMR" id="B7KS47"/>
<dbReference type="KEGG" id="mch:Mchl_3094"/>
<dbReference type="HOGENOM" id="CLU_030231_0_0_5"/>
<dbReference type="UniPathway" id="UPA00098">
    <property type="reaction ID" value="UER00360"/>
</dbReference>
<dbReference type="Proteomes" id="UP000002385">
    <property type="component" value="Chromosome"/>
</dbReference>
<dbReference type="GO" id="GO:0005737">
    <property type="term" value="C:cytoplasm"/>
    <property type="evidence" value="ECO:0007669"/>
    <property type="project" value="UniProtKB-SubCell"/>
</dbReference>
<dbReference type="GO" id="GO:0004350">
    <property type="term" value="F:glutamate-5-semialdehyde dehydrogenase activity"/>
    <property type="evidence" value="ECO:0007669"/>
    <property type="project" value="UniProtKB-UniRule"/>
</dbReference>
<dbReference type="GO" id="GO:0050661">
    <property type="term" value="F:NADP binding"/>
    <property type="evidence" value="ECO:0007669"/>
    <property type="project" value="InterPro"/>
</dbReference>
<dbReference type="GO" id="GO:0055129">
    <property type="term" value="P:L-proline biosynthetic process"/>
    <property type="evidence" value="ECO:0007669"/>
    <property type="project" value="UniProtKB-UniRule"/>
</dbReference>
<dbReference type="CDD" id="cd07079">
    <property type="entry name" value="ALDH_F18-19_ProA-GPR"/>
    <property type="match status" value="1"/>
</dbReference>
<dbReference type="FunFam" id="3.40.309.10:FF:000006">
    <property type="entry name" value="Gamma-glutamyl phosphate reductase"/>
    <property type="match status" value="1"/>
</dbReference>
<dbReference type="Gene3D" id="3.40.605.10">
    <property type="entry name" value="Aldehyde Dehydrogenase, Chain A, domain 1"/>
    <property type="match status" value="1"/>
</dbReference>
<dbReference type="Gene3D" id="3.40.309.10">
    <property type="entry name" value="Aldehyde Dehydrogenase, Chain A, domain 2"/>
    <property type="match status" value="1"/>
</dbReference>
<dbReference type="HAMAP" id="MF_00412">
    <property type="entry name" value="ProA"/>
    <property type="match status" value="1"/>
</dbReference>
<dbReference type="InterPro" id="IPR016161">
    <property type="entry name" value="Ald_DH/histidinol_DH"/>
</dbReference>
<dbReference type="InterPro" id="IPR016163">
    <property type="entry name" value="Ald_DH_C"/>
</dbReference>
<dbReference type="InterPro" id="IPR016162">
    <property type="entry name" value="Ald_DH_N"/>
</dbReference>
<dbReference type="InterPro" id="IPR015590">
    <property type="entry name" value="Aldehyde_DH_dom"/>
</dbReference>
<dbReference type="InterPro" id="IPR020593">
    <property type="entry name" value="G-glutamylP_reductase_CS"/>
</dbReference>
<dbReference type="InterPro" id="IPR012134">
    <property type="entry name" value="Glu-5-SA_DH"/>
</dbReference>
<dbReference type="InterPro" id="IPR000965">
    <property type="entry name" value="GPR_dom"/>
</dbReference>
<dbReference type="NCBIfam" id="NF001221">
    <property type="entry name" value="PRK00197.1"/>
    <property type="match status" value="1"/>
</dbReference>
<dbReference type="NCBIfam" id="TIGR00407">
    <property type="entry name" value="proA"/>
    <property type="match status" value="1"/>
</dbReference>
<dbReference type="PANTHER" id="PTHR11063:SF8">
    <property type="entry name" value="DELTA-1-PYRROLINE-5-CARBOXYLATE SYNTHASE"/>
    <property type="match status" value="1"/>
</dbReference>
<dbReference type="PANTHER" id="PTHR11063">
    <property type="entry name" value="GLUTAMATE SEMIALDEHYDE DEHYDROGENASE"/>
    <property type="match status" value="1"/>
</dbReference>
<dbReference type="Pfam" id="PF00171">
    <property type="entry name" value="Aldedh"/>
    <property type="match status" value="1"/>
</dbReference>
<dbReference type="PIRSF" id="PIRSF000151">
    <property type="entry name" value="GPR"/>
    <property type="match status" value="1"/>
</dbReference>
<dbReference type="SUPFAM" id="SSF53720">
    <property type="entry name" value="ALDH-like"/>
    <property type="match status" value="1"/>
</dbReference>
<dbReference type="PROSITE" id="PS01223">
    <property type="entry name" value="PROA"/>
    <property type="match status" value="1"/>
</dbReference>
<sequence>MPVLNLKSDLADADDLETLMAGIGRRARAAGRAMALAPAQTKDLGLRAIAEQIRTSAPAILRENARDVSAAQAAGLTNAIIDRLTLDEGRVAAIAEAVEKVAGLADPVGRQLAAFERPNGLLIERISVPLGVVGVIFESRPNVTADAGALCLKAGNAAILRAGSDSHRTATAIAAAMSEGLARAGLPADAIQLVPTRDRAAVGLMLTGLGGCVDVIVPRGGRSLVERVQAEAKVPVFAHLDGICHVYVAEGADLGMARSLLLNSKMRRTGICGAAETLLVDAAVAETHLKPLVEALLESGCAVRGDAATQAADPRVSAATDADWRTEYLDAIISAKVVDGLDAAIAHIEANGSHHTDAIITDDTNAAARFLNEVDSAIVTHNASTQFADGGEFGFGAEIGIATGRMHARGPVGVEQLTTFKYRVHGSGQTRP</sequence>
<gene>
    <name evidence="1" type="primary">proA</name>
    <name type="ordered locus">Mchl_3094</name>
</gene>
<feature type="chain" id="PRO_1000193621" description="Gamma-glutamyl phosphate reductase">
    <location>
        <begin position="1"/>
        <end position="432"/>
    </location>
</feature>
<accession>B7KS47</accession>